<gene>
    <name type="primary">AI3</name>
    <name type="synonym">ENS3</name>
    <name type="synonym">I-SCEIII</name>
    <name type="ordered locus">Q0060</name>
</gene>
<accession>P03877</accession>
<accession>A0A0A7P044</accession>
<accession>Q35790</accession>
<accession>Q9ZZX3</accession>
<reference key="1">
    <citation type="journal article" date="1980" name="J. Biol. Chem.">
        <title>Assembly of the mitochondrial membrane system. Structure and nucleotide sequence of the gene coding for subunit 1 of yeast cytochrome oxidase.</title>
        <authorList>
            <person name="Bonitz S.G."/>
            <person name="Coruzzi G."/>
            <person name="Thalenfeld B.E."/>
            <person name="Tzagoloff A."/>
            <person name="Macino G."/>
        </authorList>
    </citation>
    <scope>NUCLEOTIDE SEQUENCE [GENOMIC DNA]</scope>
    <source>
        <strain>ATCC 24657 / D273-10B</strain>
    </source>
</reference>
<reference key="2">
    <citation type="journal article" date="1994" name="Gene">
        <title>Two homologous introns from related Saccharomyces species differ in their mobility.</title>
        <authorList>
            <person name="Szczepanek T."/>
            <person name="Macadre C."/>
            <person name="Meunier B."/>
            <person name="Lazowska J."/>
        </authorList>
    </citation>
    <scope>NUCLEOTIDE SEQUENCE [GENOMIC DNA]</scope>
    <source>
        <strain>Capensis / YB4237</strain>
    </source>
</reference>
<reference key="3">
    <citation type="journal article" date="1994" name="Gene">
        <authorList>
            <person name="Szczepanek T."/>
            <person name="Macadre C."/>
            <person name="Meunier B."/>
            <person name="Lazowska J."/>
        </authorList>
    </citation>
    <scope>ERRATUM OF PUBMED:8112577</scope>
</reference>
<reference key="4">
    <citation type="journal article" date="1998" name="FEBS Lett.">
        <title>The complete sequence of the mitochondrial genome of Saccharomyces cerevisiae.</title>
        <authorList>
            <person name="Foury F."/>
            <person name="Roganti T."/>
            <person name="Lecrenier N."/>
            <person name="Purnelle B."/>
        </authorList>
    </citation>
    <scope>NUCLEOTIDE SEQUENCE [LARGE SCALE GENOMIC DNA]</scope>
    <source>
        <strain>ATCC 96604 / S288c / FY1679</strain>
    </source>
</reference>
<reference key="5">
    <citation type="journal article" date="2014" name="G3 (Bethesda)">
        <title>The reference genome sequence of Saccharomyces cerevisiae: Then and now.</title>
        <authorList>
            <person name="Engel S.R."/>
            <person name="Dietrich F.S."/>
            <person name="Fisk D.G."/>
            <person name="Binkley G."/>
            <person name="Balakrishnan R."/>
            <person name="Costanzo M.C."/>
            <person name="Dwight S.S."/>
            <person name="Hitz B.C."/>
            <person name="Karra K."/>
            <person name="Nash R.S."/>
            <person name="Weng S."/>
            <person name="Wong E.D."/>
            <person name="Lloyd P."/>
            <person name="Skrzypek M.S."/>
            <person name="Miyasato S.R."/>
            <person name="Simison M."/>
            <person name="Cherry J.M."/>
        </authorList>
    </citation>
    <scope>GENOME REANNOTATION</scope>
    <source>
        <strain>ATCC 96604 / S288c / FY1679</strain>
    </source>
</reference>
<reference key="6">
    <citation type="journal article" date="1993" name="Nucleic Acids Res.">
        <title>I-Sce III an intron-encoded DNA endonuclease from yeast mitochondria. Asymmetrical DNA binding properties and cleavage reaction.</title>
        <authorList>
            <person name="Schapira M."/>
            <person name="Desdouets C."/>
            <person name="Jacq C."/>
            <person name="Perea J."/>
        </authorList>
    </citation>
    <scope>FUNCTION</scope>
    <scope>ENDONUCLEASE ACTIVITY</scope>
    <scope>COFACTOR</scope>
    <scope>PH OPTIMUM</scope>
    <scope>CLEAVAGE SITE SPECIFICITY</scope>
</reference>
<reference key="7">
    <citation type="journal article" date="1995" name="J. Biol. Chem.">
        <title>The mobile group I intron 3 alpha of the yeast mitochondrial COXI gene encodes a 35-kDa processed protein that is an endonuclease but not a maturase.</title>
        <authorList>
            <person name="Guo W.-W."/>
            <person name="Moran J.V."/>
            <person name="Hoffman P.W."/>
            <person name="Henke R.M."/>
            <person name="Butow R.A."/>
            <person name="Perlman P.S."/>
        </authorList>
    </citation>
    <scope>FUNCTION</scope>
    <scope>ENDONUCLEASE ACTIVITY</scope>
    <scope>PROTEOLYTIC CLEAVAGE</scope>
    <scope>INTRON HOMING</scope>
</reference>
<comment type="function">
    <text evidence="2 3">Mitochondrial DNA endonuclease involved in intron homing. It introduces a specific double-strand break in the DNA of the COX1 gene and thus mediates the insertion of an intron, containing its own coding sequence (group I intron), into an intronless gene. Recognizes with high specificity and cleaves the sequence 5'-GGTTTTGGTAACTATTTATTAC-3'.</text>
</comment>
<comment type="cofactor">
    <cofactor evidence="3">
        <name>Mg(2+)</name>
        <dbReference type="ChEBI" id="CHEBI:18420"/>
    </cofactor>
</comment>
<comment type="biophysicochemical properties">
    <phDependence>
        <text evidence="3">Optimum pH is 8.0.</text>
    </phDependence>
</comment>
<comment type="subcellular location">
    <subcellularLocation>
        <location>Mitochondrion</location>
    </subcellularLocation>
    <subcellularLocation>
        <location evidence="4">Membrane</location>
        <topology evidence="4">Multi-pass membrane protein</topology>
    </subcellularLocation>
</comment>
<comment type="PTM">
    <text evidence="2 3">The mature protein may arise from proteolytic cleavage of an in-frame translation of some COX1 exons plus the intron containing the aI3 open reading frame.</text>
</comment>
<comment type="miscellaneous">
    <text>Strain Capensis / YB4237 has two stop codons in position 276 and 407, which disrupt the gene coding for this protein. Consequently, the corresponding intron containing its coding sequence is not mobile.</text>
</comment>
<comment type="similarity">
    <text evidence="4">In the C-terminal section; belongs to the LAGLIDADG endonuclease family.</text>
</comment>
<comment type="sequence caution" evidence="4">
    <conflict type="erroneous gene model prediction">
        <sequence resource="EMBL-CDS" id="AAA17560"/>
    </conflict>
</comment>
<comment type="sequence caution" evidence="4">
    <conflict type="erroneous termination">
        <sequence resource="EMBL-CDS" id="AAA17560"/>
    </conflict>
    <text>Truncated C-terminus.</text>
</comment>
<comment type="sequence caution" evidence="4">
    <conflict type="erroneous gene model prediction">
        <sequence resource="EMBL-CDS" id="CAA24061"/>
    </conflict>
</comment>
<comment type="sequence caution" evidence="4">
    <conflict type="erroneous gene model prediction">
        <sequence resource="EMBL-CDS" id="CAA24062"/>
    </conflict>
</comment>
<dbReference type="EC" id="3.1.-.-"/>
<dbReference type="EMBL" id="V00694">
    <property type="protein sequence ID" value="CAA24062.1"/>
    <property type="status" value="ALT_SEQ"/>
    <property type="molecule type" value="Genomic_DNA"/>
</dbReference>
<dbReference type="EMBL" id="V00694">
    <property type="protein sequence ID" value="CAA24061.1"/>
    <property type="status" value="ALT_SEQ"/>
    <property type="molecule type" value="Genomic_DNA"/>
</dbReference>
<dbReference type="EMBL" id="U00801">
    <property type="protein sequence ID" value="AAA17560.1"/>
    <property type="status" value="ALT_SEQ"/>
    <property type="molecule type" value="Unassigned_DNA"/>
</dbReference>
<dbReference type="EMBL" id="KP263414">
    <property type="protein sequence ID" value="AIZ98884.1"/>
    <property type="molecule type" value="Genomic_DNA"/>
</dbReference>
<dbReference type="PIR" id="A04510">
    <property type="entry name" value="QXBY33"/>
</dbReference>
<dbReference type="PIR" id="S78646">
    <property type="entry name" value="S78646"/>
</dbReference>
<dbReference type="RefSeq" id="NP_009308.2">
    <property type="nucleotide sequence ID" value="NC_001224.1"/>
</dbReference>
<dbReference type="SMR" id="P03877"/>
<dbReference type="BioGRID" id="34787">
    <property type="interactions" value="2"/>
</dbReference>
<dbReference type="FunCoup" id="P03877">
    <property type="interactions" value="9"/>
</dbReference>
<dbReference type="STRING" id="4932.Q0060"/>
<dbReference type="PaxDb" id="4932-Q0060"/>
<dbReference type="PeptideAtlas" id="P03877"/>
<dbReference type="EnsemblFungi" id="Q0060_mRNA">
    <property type="protein sequence ID" value="Q0060"/>
    <property type="gene ID" value="Q0060"/>
</dbReference>
<dbReference type="GeneID" id="854595"/>
<dbReference type="KEGG" id="sce:Q0060"/>
<dbReference type="AGR" id="SGD:S000007263"/>
<dbReference type="SGD" id="S000007263">
    <property type="gene designation" value="AI3"/>
</dbReference>
<dbReference type="VEuPathDB" id="FungiDB:Q0060"/>
<dbReference type="eggNOG" id="KOG4769">
    <property type="taxonomic scope" value="Eukaryota"/>
</dbReference>
<dbReference type="HOGENOM" id="CLU_559205_0_0_1"/>
<dbReference type="InParanoid" id="P03877"/>
<dbReference type="OMA" id="YIMSAIA"/>
<dbReference type="OrthoDB" id="4905839at2759"/>
<dbReference type="BioCyc" id="YEAST:G3O-34374-MONOMER"/>
<dbReference type="BioGRID-ORCS" id="854595">
    <property type="hits" value="0 hits in 10 CRISPR screens"/>
</dbReference>
<dbReference type="PRO" id="PR:P03877"/>
<dbReference type="Proteomes" id="UP000002311">
    <property type="component" value="Mitochondrion"/>
</dbReference>
<dbReference type="RNAct" id="P03877">
    <property type="molecule type" value="protein"/>
</dbReference>
<dbReference type="GO" id="GO:0005739">
    <property type="term" value="C:mitochondrion"/>
    <property type="evidence" value="ECO:0000304"/>
    <property type="project" value="SGD"/>
</dbReference>
<dbReference type="GO" id="GO:0045277">
    <property type="term" value="C:respiratory chain complex IV"/>
    <property type="evidence" value="ECO:0000318"/>
    <property type="project" value="GO_Central"/>
</dbReference>
<dbReference type="GO" id="GO:0004129">
    <property type="term" value="F:cytochrome-c oxidase activity"/>
    <property type="evidence" value="ECO:0007669"/>
    <property type="project" value="InterPro"/>
</dbReference>
<dbReference type="GO" id="GO:0004519">
    <property type="term" value="F:endonuclease activity"/>
    <property type="evidence" value="ECO:0000314"/>
    <property type="project" value="SGD"/>
</dbReference>
<dbReference type="GO" id="GO:0020037">
    <property type="term" value="F:heme binding"/>
    <property type="evidence" value="ECO:0007669"/>
    <property type="project" value="InterPro"/>
</dbReference>
<dbReference type="GO" id="GO:0009060">
    <property type="term" value="P:aerobic respiration"/>
    <property type="evidence" value="ECO:0000318"/>
    <property type="project" value="GO_Central"/>
</dbReference>
<dbReference type="GO" id="GO:0006314">
    <property type="term" value="P:intron homing"/>
    <property type="evidence" value="ECO:0007669"/>
    <property type="project" value="UniProtKB-KW"/>
</dbReference>
<dbReference type="GO" id="GO:0006397">
    <property type="term" value="P:mRNA processing"/>
    <property type="evidence" value="ECO:0007669"/>
    <property type="project" value="UniProtKB-KW"/>
</dbReference>
<dbReference type="GO" id="GO:0022904">
    <property type="term" value="P:respiratory electron transport chain"/>
    <property type="evidence" value="ECO:0000318"/>
    <property type="project" value="GO_Central"/>
</dbReference>
<dbReference type="GO" id="GO:0008380">
    <property type="term" value="P:RNA splicing"/>
    <property type="evidence" value="ECO:0007669"/>
    <property type="project" value="UniProtKB-KW"/>
</dbReference>
<dbReference type="FunFam" id="3.10.28.10:FF:000007">
    <property type="entry name" value="Intron-encoded DNA endonuclease aI3"/>
    <property type="match status" value="1"/>
</dbReference>
<dbReference type="FunFam" id="3.10.28.10:FF:000011">
    <property type="entry name" value="Intron-encoded DNA endonuclease aI3"/>
    <property type="match status" value="1"/>
</dbReference>
<dbReference type="Gene3D" id="1.20.210.10">
    <property type="entry name" value="Cytochrome c oxidase-like, subunit I domain"/>
    <property type="match status" value="1"/>
</dbReference>
<dbReference type="Gene3D" id="3.10.28.10">
    <property type="entry name" value="Homing endonucleases"/>
    <property type="match status" value="2"/>
</dbReference>
<dbReference type="InterPro" id="IPR023616">
    <property type="entry name" value="Cyt_c_oxase-like_su1_dom"/>
</dbReference>
<dbReference type="InterPro" id="IPR036927">
    <property type="entry name" value="Cyt_c_oxase-like_su1_sf"/>
</dbReference>
<dbReference type="InterPro" id="IPR000883">
    <property type="entry name" value="Cyt_C_Oxase_1"/>
</dbReference>
<dbReference type="InterPro" id="IPR027434">
    <property type="entry name" value="Homing_endonucl"/>
</dbReference>
<dbReference type="InterPro" id="IPR004860">
    <property type="entry name" value="LAGLIDADG_dom"/>
</dbReference>
<dbReference type="InterPro" id="IPR051289">
    <property type="entry name" value="LAGLIDADG_Endonuclease"/>
</dbReference>
<dbReference type="PANTHER" id="PTHR36181">
    <property type="entry name" value="INTRON-ENCODED ENDONUCLEASE AI3-RELATED"/>
    <property type="match status" value="1"/>
</dbReference>
<dbReference type="PANTHER" id="PTHR36181:SF6">
    <property type="entry name" value="INTRON-ENCODED LAGLIDADG ENDONUCLEASE FAMILY PROTEIN"/>
    <property type="match status" value="1"/>
</dbReference>
<dbReference type="Pfam" id="PF00115">
    <property type="entry name" value="COX1"/>
    <property type="match status" value="1"/>
</dbReference>
<dbReference type="Pfam" id="PF00961">
    <property type="entry name" value="LAGLIDADG_1"/>
    <property type="match status" value="2"/>
</dbReference>
<dbReference type="PRINTS" id="PR01165">
    <property type="entry name" value="CYCOXIDASEI"/>
</dbReference>
<dbReference type="SUPFAM" id="SSF81442">
    <property type="entry name" value="Cytochrome c oxidase subunit I-like"/>
    <property type="match status" value="1"/>
</dbReference>
<dbReference type="SUPFAM" id="SSF55608">
    <property type="entry name" value="Homing endonucleases"/>
    <property type="match status" value="2"/>
</dbReference>
<dbReference type="PROSITE" id="PS50855">
    <property type="entry name" value="COX1"/>
    <property type="match status" value="1"/>
</dbReference>
<keyword id="KW-0255">Endonuclease</keyword>
<keyword id="KW-0378">Hydrolase</keyword>
<keyword id="KW-0404">Intron homing</keyword>
<keyword id="KW-0472">Membrane</keyword>
<keyword id="KW-0496">Mitochondrion</keyword>
<keyword id="KW-0507">mRNA processing</keyword>
<keyword id="KW-0508">mRNA splicing</keyword>
<keyword id="KW-0540">Nuclease</keyword>
<keyword id="KW-1185">Reference proteome</keyword>
<keyword id="KW-0812">Transmembrane</keyword>
<keyword id="KW-1133">Transmembrane helix</keyword>
<geneLocation type="mitochondrion"/>
<evidence type="ECO:0000255" key="1"/>
<evidence type="ECO:0000269" key="2">
    <source>
    </source>
</evidence>
<evidence type="ECO:0000269" key="3">
    <source>
    </source>
</evidence>
<evidence type="ECO:0000305" key="4"/>
<protein>
    <recommendedName>
        <fullName>Intron-encoded DNA endonuclease aI3</fullName>
    </recommendedName>
    <alternativeName>
        <fullName>DNA endonuclease I-SceIII</fullName>
    </alternativeName>
    <component>
        <recommendedName>
            <fullName>Truncated non-functional cytochrome oxidase 1</fullName>
        </recommendedName>
    </component>
    <component>
        <recommendedName>
            <fullName>DNA endonuclease aI3</fullName>
            <ecNumber>3.1.-.-</ecNumber>
        </recommendedName>
        <alternativeName>
            <fullName>Intron-encoded endonuclease I-SceIII</fullName>
        </alternativeName>
    </component>
</protein>
<name>SCE3_YEAST</name>
<proteinExistence type="evidence at protein level"/>
<feature type="chain" id="PRO_0000045049" description="Truncated non-functional cytochrome oxidase 1">
    <location>
        <begin position="1"/>
        <end status="unknown"/>
    </location>
</feature>
<feature type="chain" id="PRO_0000045050" description="DNA endonuclease aI3">
    <location>
        <begin status="unknown"/>
        <end position="415"/>
    </location>
</feature>
<feature type="transmembrane region" description="Helical" evidence="1">
    <location>
        <begin position="16"/>
        <end position="36"/>
    </location>
</feature>
<feature type="transmembrane region" description="Helical" evidence="1">
    <location>
        <begin position="57"/>
        <end position="77"/>
    </location>
</feature>
<feature type="region of interest" description="COX1 exons 1 to 3 encoded">
    <location>
        <begin position="1"/>
        <end position="81"/>
    </location>
</feature>
<feature type="region of interest" description="COX1 intron 3 encoded">
    <location>
        <begin position="82"/>
        <end position="415"/>
    </location>
</feature>
<feature type="sequence variant" description="In strain: Capensis / YB4237.">
    <original>F</original>
    <variation>Y</variation>
    <location>
        <position position="55"/>
    </location>
</feature>
<feature type="sequence variant" description="In strain: Capensis / YB4237.">
    <original>V</original>
    <variation>A</variation>
    <location>
        <position position="60"/>
    </location>
</feature>
<feature type="sequence variant" description="In strain: Capensis / YB4237.">
    <original>V</original>
    <variation>W</variation>
    <location>
        <position position="71"/>
    </location>
</feature>
<feature type="sequence variant" description="In strain: Capensis / YB4237.">
    <original>I</original>
    <variation>M</variation>
    <location>
        <position position="76"/>
    </location>
</feature>
<feature type="sequence variant" description="In strain: Capensis / YB4237.">
    <original>R</original>
    <variation>M</variation>
    <location>
        <position position="399"/>
    </location>
</feature>
<feature type="sequence conflict" description="In Ref. 1; CAA24062." evidence="4" ref="1">
    <original>T</original>
    <variation>S</variation>
    <location>
        <position position="122"/>
    </location>
</feature>
<feature type="sequence conflict" description="In Ref. 1; CAA24062." evidence="4" ref="1">
    <original>T</original>
    <variation>P</variation>
    <location>
        <position position="176"/>
    </location>
</feature>
<feature type="sequence conflict" description="In Ref. 1; CAA24062." evidence="4" ref="1">
    <original>E</original>
    <variation>G</variation>
    <location>
        <position position="200"/>
    </location>
</feature>
<feature type="sequence conflict" description="In Ref. 1; CAA24062." evidence="4" ref="1">
    <original>TI</original>
    <variation>NQ</variation>
    <location>
        <begin position="217"/>
        <end position="218"/>
    </location>
</feature>
<feature type="sequence conflict" description="In Ref. 1; CAA24062." evidence="4" ref="1">
    <original>GM</original>
    <variation>IL</variation>
    <location>
        <begin position="247"/>
        <end position="248"/>
    </location>
</feature>
<feature type="sequence conflict" description="In Ref. 1; CAA24062." evidence="4" ref="1">
    <original>A</original>
    <variation>T</variation>
    <location>
        <position position="269"/>
    </location>
</feature>
<feature type="sequence conflict" description="In Ref. 1; CAA24062." evidence="4" ref="1">
    <original>N</original>
    <variation>I</variation>
    <location>
        <position position="284"/>
    </location>
</feature>
<feature type="sequence conflict" description="In Ref. 1; CAA24062." evidence="4" ref="1">
    <original>K</original>
    <variation>N</variation>
    <location>
        <position position="380"/>
    </location>
</feature>
<organism>
    <name type="scientific">Saccharomyces cerevisiae (strain ATCC 204508 / S288c)</name>
    <name type="common">Baker's yeast</name>
    <dbReference type="NCBI Taxonomy" id="559292"/>
    <lineage>
        <taxon>Eukaryota</taxon>
        <taxon>Fungi</taxon>
        <taxon>Dikarya</taxon>
        <taxon>Ascomycota</taxon>
        <taxon>Saccharomycotina</taxon>
        <taxon>Saccharomycetes</taxon>
        <taxon>Saccharomycetales</taxon>
        <taxon>Saccharomycetaceae</taxon>
        <taxon>Saccharomyces</taxon>
    </lineage>
</organism>
<sequence>MVQRWLYSTNAKDIAVLYFMLAIFSGMAGTAMSLIIRLELAAPGSQYLHGNSQLFNVLVVGHAVLMIFFLVMPALIGGFGNQKRYESNNNNNQVMENKEYNLKLNYDKLGPYLAGLIEGDGTITVQNSSSMKKSKYRPLIVVVFKLEDLELANYLCNLTKCGKVYKKINRNYVLWTIHDLKGVYTLLNIINGYMRTPKYEAFVRGAEFMNNYINSTTITHNKLKNMDNIKIKPLDTSDIGSNAWLAGMTDADGNFSINLMNGKNRSSRAMPYYCLELRQNYQKNSNNNNINFSYFYIMSAIATYFNVNLYSRERNLNLLVSTNNTYKTYYSYKVMVANTYKNIKVMEYFNKYSLLSSKHLDFLDWSKLVILINNEGQSMKTNGSWELGMNLRKDYNKTRTTFTWSHLKNTYLENK</sequence>